<name>AEP2_VANPO</name>
<feature type="transit peptide" description="Mitochondrion" evidence="2">
    <location>
        <begin position="1"/>
        <end position="35"/>
    </location>
</feature>
<feature type="chain" id="PRO_0000405633" description="ATPase expression protein 2, mitochondrial">
    <location>
        <begin position="36"/>
        <end position="566"/>
    </location>
</feature>
<feature type="region of interest" description="Disordered" evidence="3">
    <location>
        <begin position="536"/>
        <end position="555"/>
    </location>
</feature>
<dbReference type="EMBL" id="DS480521">
    <property type="protein sequence ID" value="EDO14693.1"/>
    <property type="molecule type" value="Genomic_DNA"/>
</dbReference>
<dbReference type="RefSeq" id="XP_001642551.1">
    <property type="nucleotide sequence ID" value="XM_001642501.1"/>
</dbReference>
<dbReference type="FunCoup" id="A7TSQ8">
    <property type="interactions" value="51"/>
</dbReference>
<dbReference type="GeneID" id="5542724"/>
<dbReference type="KEGG" id="vpo:Kpol_1068p3"/>
<dbReference type="eggNOG" id="ENOG502RX9I">
    <property type="taxonomic scope" value="Eukaryota"/>
</dbReference>
<dbReference type="HOGENOM" id="CLU_035070_0_0_1"/>
<dbReference type="InParanoid" id="A7TSQ8"/>
<dbReference type="OMA" id="LQLRCGA"/>
<dbReference type="OrthoDB" id="4062665at2759"/>
<dbReference type="PhylomeDB" id="A7TSQ8"/>
<dbReference type="Proteomes" id="UP000000267">
    <property type="component" value="Unassembled WGS sequence"/>
</dbReference>
<dbReference type="GO" id="GO:0005739">
    <property type="term" value="C:mitochondrion"/>
    <property type="evidence" value="ECO:0007669"/>
    <property type="project" value="UniProtKB-SubCell"/>
</dbReference>
<dbReference type="GO" id="GO:0003723">
    <property type="term" value="F:RNA binding"/>
    <property type="evidence" value="ECO:0007669"/>
    <property type="project" value="UniProtKB-KW"/>
</dbReference>
<dbReference type="GO" id="GO:0006417">
    <property type="term" value="P:regulation of translation"/>
    <property type="evidence" value="ECO:0007669"/>
    <property type="project" value="UniProtKB-KW"/>
</dbReference>
<dbReference type="InterPro" id="IPR024319">
    <property type="entry name" value="ATPase_expression_mit"/>
</dbReference>
<dbReference type="Pfam" id="PF12921">
    <property type="entry name" value="ATP13"/>
    <property type="match status" value="1"/>
</dbReference>
<reference key="1">
    <citation type="journal article" date="2007" name="Proc. Natl. Acad. Sci. U.S.A.">
        <title>Independent sorting-out of thousands of duplicated gene pairs in two yeast species descended from a whole-genome duplication.</title>
        <authorList>
            <person name="Scannell D.R."/>
            <person name="Frank A.C."/>
            <person name="Conant G.C."/>
            <person name="Byrne K.P."/>
            <person name="Woolfit M."/>
            <person name="Wolfe K.H."/>
        </authorList>
    </citation>
    <scope>NUCLEOTIDE SEQUENCE [LARGE SCALE GENOMIC DNA]</scope>
    <source>
        <strain>ATCC 22028 / DSM 70294 / BCRC 21397 / CBS 2163 / NBRC 10782 / NRRL Y-8283 / UCD 57-17</strain>
    </source>
</reference>
<comment type="function">
    <text evidence="1">Required for translation of the mitochondrial OLI1 transcript coding for the mitochondrial ATP synthase subunit 9.</text>
</comment>
<comment type="subunit">
    <text evidence="1">Binds to the 5'UTR of the OLI1 mRNA.</text>
</comment>
<comment type="subcellular location">
    <subcellularLocation>
        <location evidence="1">Mitochondrion</location>
    </subcellularLocation>
</comment>
<comment type="similarity">
    <text evidence="4">Belongs to the AEP2 family.</text>
</comment>
<keyword id="KW-0496">Mitochondrion</keyword>
<keyword id="KW-1185">Reference proteome</keyword>
<keyword id="KW-0694">RNA-binding</keyword>
<keyword id="KW-0809">Transit peptide</keyword>
<keyword id="KW-0810">Translation regulation</keyword>
<proteinExistence type="inferred from homology"/>
<evidence type="ECO:0000250" key="1"/>
<evidence type="ECO:0000255" key="2"/>
<evidence type="ECO:0000256" key="3">
    <source>
        <dbReference type="SAM" id="MobiDB-lite"/>
    </source>
</evidence>
<evidence type="ECO:0000305" key="4"/>
<protein>
    <recommendedName>
        <fullName>ATPase expression protein 2, mitochondrial</fullName>
    </recommendedName>
</protein>
<organism>
    <name type="scientific">Vanderwaltozyma polyspora (strain ATCC 22028 / DSM 70294 / BCRC 21397 / CBS 2163 / NBRC 10782 / NRRL Y-8283 / UCD 57-17)</name>
    <name type="common">Kluyveromyces polysporus</name>
    <dbReference type="NCBI Taxonomy" id="436907"/>
    <lineage>
        <taxon>Eukaryota</taxon>
        <taxon>Fungi</taxon>
        <taxon>Dikarya</taxon>
        <taxon>Ascomycota</taxon>
        <taxon>Saccharomycotina</taxon>
        <taxon>Saccharomycetes</taxon>
        <taxon>Saccharomycetales</taxon>
        <taxon>Saccharomycetaceae</taxon>
        <taxon>Vanderwaltozyma</taxon>
    </lineage>
</organism>
<gene>
    <name type="primary">AEP2</name>
    <name type="ORF">Kpol_1068p3</name>
</gene>
<accession>A7TSQ8</accession>
<sequence>MLGQFIGSQKLPYKNVAVQLSKSCFGLTLIKSKRITPISTSRYEKHYSTTSVKYAIESELDSLVHSRNSNTIIKQSDVLPENIWRNYLKNNEIDKFTLHLLASLRGDDDFVKNLFKSGDLTYNELSIFINRIYKSNGHDIKRVIQNHHSLSYTELIYEIFELYTSTIPKESGIIKLNALHLKDLNLFITIFIKEAQLSKAQNVLQYIIDAEGSIEKITDHDTMVNFLRLRCGGLPKFWLVPQASYAVTKQTKKNSRLSSNSPNTRFPSSYKSTVPNTVLFEVINMILNKKVWKSKHSGILDSTIVYSLAHTFQKQMMDGFIKEHWGISSHGDPLDLFIKKKKVASAPSNEILIAIMSSYIYKDRNIDGAMKILDKFIRMYPDISLDNMFWRRLIQWCNRLWDPKIDRQGTFGYGCWNMMKNWNGAGTGKDVVLPYDFQIYEEFYRLFKRTNNGKIAAEIVSNVLIPHLSEKNVAVKKAELNLLNKYQTLAMNWLIERRQFKKAAFFIEEWSIDRNNRIQLREAFKKRKQLMLRKLSTRDKKSQSQKKRQDRYDEMEEEDMIIGRLW</sequence>